<sequence length="326" mass="35888">MATTERKPLLLDFEKPLAELATRIDQIRQLAEENGVDVSGQIRQLEARAMQLREEIFTSLSPSQRLQVARHPRRPSTLDYIQAISDEWMELHGDRCGGDDPALVGGIGRLSGQPVVMLGHQKGRDTKDNIARNFGMPYPGGYRKAMRLMEHANKFSMPILTFIDTPGAWSGVEAEHQGQGEAIAYNLREMFCLDVPIICTVIGEGGSGGALGIGVGDRLLMFEHSVYTVATPEACAAILWKDAGKAPQAAVALKIISHDLKRLGIIDQILPEPTGGAHSDPLKAATTLKQVLLENLDELNHLTAPERRQLRYEKFRKIGVFTEVAH</sequence>
<comment type="function">
    <text evidence="1">Component of the acetyl coenzyme A carboxylase (ACC) complex. First, biotin carboxylase catalyzes the carboxylation of biotin on its carrier protein (BCCP) and then the CO(2) group is transferred by the carboxyltransferase to acetyl-CoA to form malonyl-CoA.</text>
</comment>
<comment type="catalytic activity">
    <reaction evidence="1">
        <text>N(6)-carboxybiotinyl-L-lysyl-[protein] + acetyl-CoA = N(6)-biotinyl-L-lysyl-[protein] + malonyl-CoA</text>
        <dbReference type="Rhea" id="RHEA:54728"/>
        <dbReference type="Rhea" id="RHEA-COMP:10505"/>
        <dbReference type="Rhea" id="RHEA-COMP:10506"/>
        <dbReference type="ChEBI" id="CHEBI:57288"/>
        <dbReference type="ChEBI" id="CHEBI:57384"/>
        <dbReference type="ChEBI" id="CHEBI:83144"/>
        <dbReference type="ChEBI" id="CHEBI:83145"/>
        <dbReference type="EC" id="2.1.3.15"/>
    </reaction>
</comment>
<comment type="pathway">
    <text evidence="1">Lipid metabolism; malonyl-CoA biosynthesis; malonyl-CoA from acetyl-CoA: step 1/1.</text>
</comment>
<comment type="subunit">
    <text evidence="1">Acetyl-CoA carboxylase is a heterohexamer composed of biotin carboxyl carrier protein (AccB), biotin carboxylase (AccC) and two subunits each of ACCase subunit alpha (AccA) and ACCase subunit beta (AccD).</text>
</comment>
<comment type="subcellular location">
    <subcellularLocation>
        <location evidence="1">Cytoplasm</location>
    </subcellularLocation>
</comment>
<comment type="similarity">
    <text evidence="1">Belongs to the AccA family.</text>
</comment>
<protein>
    <recommendedName>
        <fullName evidence="1">Acetyl-coenzyme A carboxylase carboxyl transferase subunit alpha</fullName>
        <shortName evidence="1">ACCase subunit alpha</shortName>
        <shortName evidence="1">Acetyl-CoA carboxylase carboxyltransferase subunit alpha</shortName>
        <ecNumber evidence="1">2.1.3.15</ecNumber>
    </recommendedName>
</protein>
<reference key="1">
    <citation type="journal article" date="2013" name="Plant Physiol.">
        <title>A Nostoc punctiforme Sugar Transporter Necessary to Establish a Cyanobacterium-Plant Symbiosis.</title>
        <authorList>
            <person name="Ekman M."/>
            <person name="Picossi S."/>
            <person name="Campbell E.L."/>
            <person name="Meeks J.C."/>
            <person name="Flores E."/>
        </authorList>
    </citation>
    <scope>NUCLEOTIDE SEQUENCE [LARGE SCALE GENOMIC DNA]</scope>
    <source>
        <strain>ATCC 29133 / PCC 73102</strain>
    </source>
</reference>
<evidence type="ECO:0000255" key="1">
    <source>
        <dbReference type="HAMAP-Rule" id="MF_00823"/>
    </source>
</evidence>
<evidence type="ECO:0000255" key="2">
    <source>
        <dbReference type="PROSITE-ProRule" id="PRU01137"/>
    </source>
</evidence>
<proteinExistence type="inferred from homology"/>
<keyword id="KW-0067">ATP-binding</keyword>
<keyword id="KW-0963">Cytoplasm</keyword>
<keyword id="KW-0275">Fatty acid biosynthesis</keyword>
<keyword id="KW-0276">Fatty acid metabolism</keyword>
<keyword id="KW-0444">Lipid biosynthesis</keyword>
<keyword id="KW-0443">Lipid metabolism</keyword>
<keyword id="KW-0547">Nucleotide-binding</keyword>
<keyword id="KW-1185">Reference proteome</keyword>
<keyword id="KW-0808">Transferase</keyword>
<feature type="chain" id="PRO_1000134501" description="Acetyl-coenzyme A carboxylase carboxyl transferase subunit alpha">
    <location>
        <begin position="1"/>
        <end position="326"/>
    </location>
</feature>
<feature type="domain" description="CoA carboxyltransferase C-terminal" evidence="2">
    <location>
        <begin position="45"/>
        <end position="298"/>
    </location>
</feature>
<gene>
    <name evidence="1" type="primary">accA</name>
    <name type="ordered locus">Npun_R1709</name>
</gene>
<accession>B2J1L9</accession>
<organism>
    <name type="scientific">Nostoc punctiforme (strain ATCC 29133 / PCC 73102)</name>
    <dbReference type="NCBI Taxonomy" id="63737"/>
    <lineage>
        <taxon>Bacteria</taxon>
        <taxon>Bacillati</taxon>
        <taxon>Cyanobacteriota</taxon>
        <taxon>Cyanophyceae</taxon>
        <taxon>Nostocales</taxon>
        <taxon>Nostocaceae</taxon>
        <taxon>Nostoc</taxon>
    </lineage>
</organism>
<dbReference type="EC" id="2.1.3.15" evidence="1"/>
<dbReference type="EMBL" id="CP001037">
    <property type="protein sequence ID" value="ACC80380.1"/>
    <property type="molecule type" value="Genomic_DNA"/>
</dbReference>
<dbReference type="RefSeq" id="WP_012408398.1">
    <property type="nucleotide sequence ID" value="NC_010628.1"/>
</dbReference>
<dbReference type="SMR" id="B2J1L9"/>
<dbReference type="STRING" id="63737.Npun_R1709"/>
<dbReference type="EnsemblBacteria" id="ACC80380">
    <property type="protein sequence ID" value="ACC80380"/>
    <property type="gene ID" value="Npun_R1709"/>
</dbReference>
<dbReference type="KEGG" id="npu:Npun_R1709"/>
<dbReference type="eggNOG" id="COG0825">
    <property type="taxonomic scope" value="Bacteria"/>
</dbReference>
<dbReference type="HOGENOM" id="CLU_015486_0_2_3"/>
<dbReference type="OrthoDB" id="9808023at2"/>
<dbReference type="PhylomeDB" id="B2J1L9"/>
<dbReference type="UniPathway" id="UPA00655">
    <property type="reaction ID" value="UER00711"/>
</dbReference>
<dbReference type="Proteomes" id="UP000001191">
    <property type="component" value="Chromosome"/>
</dbReference>
<dbReference type="GO" id="GO:0009317">
    <property type="term" value="C:acetyl-CoA carboxylase complex"/>
    <property type="evidence" value="ECO:0007669"/>
    <property type="project" value="InterPro"/>
</dbReference>
<dbReference type="GO" id="GO:0003989">
    <property type="term" value="F:acetyl-CoA carboxylase activity"/>
    <property type="evidence" value="ECO:0007669"/>
    <property type="project" value="InterPro"/>
</dbReference>
<dbReference type="GO" id="GO:0005524">
    <property type="term" value="F:ATP binding"/>
    <property type="evidence" value="ECO:0007669"/>
    <property type="project" value="UniProtKB-KW"/>
</dbReference>
<dbReference type="GO" id="GO:0016743">
    <property type="term" value="F:carboxyl- or carbamoyltransferase activity"/>
    <property type="evidence" value="ECO:0007669"/>
    <property type="project" value="UniProtKB-UniRule"/>
</dbReference>
<dbReference type="GO" id="GO:0006633">
    <property type="term" value="P:fatty acid biosynthetic process"/>
    <property type="evidence" value="ECO:0007669"/>
    <property type="project" value="UniProtKB-KW"/>
</dbReference>
<dbReference type="GO" id="GO:2001295">
    <property type="term" value="P:malonyl-CoA biosynthetic process"/>
    <property type="evidence" value="ECO:0007669"/>
    <property type="project" value="UniProtKB-UniRule"/>
</dbReference>
<dbReference type="Gene3D" id="3.90.226.10">
    <property type="entry name" value="2-enoyl-CoA Hydratase, Chain A, domain 1"/>
    <property type="match status" value="1"/>
</dbReference>
<dbReference type="HAMAP" id="MF_00823">
    <property type="entry name" value="AcetylCoA_CT_alpha"/>
    <property type="match status" value="1"/>
</dbReference>
<dbReference type="InterPro" id="IPR001095">
    <property type="entry name" value="Acetyl_CoA_COase_a_su"/>
</dbReference>
<dbReference type="InterPro" id="IPR029045">
    <property type="entry name" value="ClpP/crotonase-like_dom_sf"/>
</dbReference>
<dbReference type="InterPro" id="IPR011763">
    <property type="entry name" value="COA_CT_C"/>
</dbReference>
<dbReference type="NCBIfam" id="TIGR00513">
    <property type="entry name" value="accA"/>
    <property type="match status" value="1"/>
</dbReference>
<dbReference type="NCBIfam" id="NF041504">
    <property type="entry name" value="AccA_sub"/>
    <property type="match status" value="1"/>
</dbReference>
<dbReference type="NCBIfam" id="NF004344">
    <property type="entry name" value="PRK05724.1"/>
    <property type="match status" value="1"/>
</dbReference>
<dbReference type="PANTHER" id="PTHR42853">
    <property type="entry name" value="ACETYL-COENZYME A CARBOXYLASE CARBOXYL TRANSFERASE SUBUNIT ALPHA"/>
    <property type="match status" value="1"/>
</dbReference>
<dbReference type="PANTHER" id="PTHR42853:SF3">
    <property type="entry name" value="ACETYL-COENZYME A CARBOXYLASE CARBOXYL TRANSFERASE SUBUNIT ALPHA, CHLOROPLASTIC"/>
    <property type="match status" value="1"/>
</dbReference>
<dbReference type="Pfam" id="PF03255">
    <property type="entry name" value="ACCA"/>
    <property type="match status" value="1"/>
</dbReference>
<dbReference type="PRINTS" id="PR01069">
    <property type="entry name" value="ACCCTRFRASEA"/>
</dbReference>
<dbReference type="SUPFAM" id="SSF52096">
    <property type="entry name" value="ClpP/crotonase"/>
    <property type="match status" value="1"/>
</dbReference>
<dbReference type="PROSITE" id="PS50989">
    <property type="entry name" value="COA_CT_CTER"/>
    <property type="match status" value="1"/>
</dbReference>
<name>ACCA_NOSP7</name>